<feature type="chain" id="PRO_0000080463" description="Cyclin-F">
    <location>
        <begin position="1"/>
        <end position="786"/>
    </location>
</feature>
<feature type="domain" description="F-box" evidence="2">
    <location>
        <begin position="29"/>
        <end position="76"/>
    </location>
</feature>
<feature type="domain" description="Cyclin N-terminal" evidence="1">
    <location>
        <begin position="288"/>
        <end position="405"/>
    </location>
</feature>
<feature type="region of interest" description="Disordered" evidence="3">
    <location>
        <begin position="564"/>
        <end position="593"/>
    </location>
</feature>
<feature type="region of interest" description="PEST">
    <location>
        <begin position="582"/>
        <end position="766"/>
    </location>
</feature>
<feature type="region of interest" description="Disordered" evidence="3">
    <location>
        <begin position="675"/>
        <end position="738"/>
    </location>
</feature>
<feature type="short sequence motif" description="Nuclear localization signal 1" evidence="4">
    <location>
        <begin position="20"/>
        <end position="28"/>
    </location>
</feature>
<feature type="short sequence motif" description="D box 1" evidence="12">
    <location>
        <begin position="310"/>
        <end position="313"/>
    </location>
</feature>
<feature type="short sequence motif" description="D box 2" evidence="12">
    <location>
        <begin position="343"/>
        <end position="346"/>
    </location>
</feature>
<feature type="short sequence motif" description="D box 3" evidence="12">
    <location>
        <begin position="349"/>
        <end position="352"/>
    </location>
</feature>
<feature type="short sequence motif" description="D box 4" evidence="12">
    <location>
        <begin position="351"/>
        <end position="354"/>
    </location>
</feature>
<feature type="short sequence motif" description="Nuclear localization signal 2" evidence="4">
    <location>
        <begin position="568"/>
        <end position="574"/>
    </location>
</feature>
<feature type="short sequence motif" description="D box 5" evidence="12">
    <location>
        <begin position="767"/>
        <end position="770"/>
    </location>
</feature>
<feature type="compositionally biased region" description="Low complexity" evidence="3">
    <location>
        <begin position="697"/>
        <end position="714"/>
    </location>
</feature>
<feature type="compositionally biased region" description="Polar residues" evidence="3">
    <location>
        <begin position="723"/>
        <end position="738"/>
    </location>
</feature>
<feature type="sequence variant" id="VAR_085177" description="In FTDALS5; uncertain significance; impaired degradation by the ubiquitin proteasome system (UPS); dbSNP:rs944306963." evidence="11">
    <original>S</original>
    <variation>G</variation>
    <location>
        <position position="3"/>
    </location>
</feature>
<feature type="sequence variant" id="VAR_085178" description="In FTDALS5; uncertain significance; impaired degradation by the ubiquitin proteasome system (UPS); dbSNP:rs1465313712." evidence="11">
    <original>K</original>
    <variation>R</variation>
    <location>
        <position position="97"/>
    </location>
</feature>
<feature type="sequence variant" id="VAR_085179" description="In FTDALS5; uncertain significance; dbSNP:rs745821656." evidence="11">
    <original>T</original>
    <variation>I</variation>
    <location>
        <position position="181"/>
    </location>
</feature>
<feature type="sequence variant" id="VAR_085180" description="In FTDALS5; impaired degradation by the ubiquitin proteasome system (UPS); dbSNP:rs1371569927." evidence="11">
    <original>S</original>
    <variation>R</variation>
    <location>
        <position position="195"/>
    </location>
</feature>
<feature type="sequence variant" id="VAR_085181" description="In FTDALS5; uncertain significance; impaired degradation by the ubiquitin proteasome system (UPS); dbSNP:rs954539468." evidence="11">
    <original>R</original>
    <variation>T</variation>
    <location>
        <position position="392"/>
    </location>
</feature>
<feature type="sequence variant" id="VAR_085182" description="In FTDALS5; uncertain significance; impaired degradation by the ubiquitin proteasome system (UPS); dbSNP:rs760953006." evidence="11">
    <original>S</original>
    <variation>P</variation>
    <location>
        <position position="509"/>
    </location>
</feature>
<feature type="sequence variant" id="VAR_085183" description="In FTDALS5; uncertain significance; dbSNP:rs756914411." evidence="11">
    <original>T</original>
    <variation>I</variation>
    <location>
        <position position="543"/>
    </location>
</feature>
<feature type="sequence variant" id="VAR_085184" description="In FTDALS5; increased 'Lys-48'-linked polyubiquitination of proteins targeted for proteasomal degradation, but no increase in 'Lys-63'-linked polyubiquitinated proteins; accumulation of ubiquitinated proteins including RRM2 and TARDBP/TDP43; impaired autophagosome-lysosome fusion; impaired degradation by the ubiquitin proteasome system (UPS); increased levels of ubiquitinated autophagy receptor SQSTM1/p62; dbSNP:rs778264897." evidence="11 13">
    <original>S</original>
    <variation>G</variation>
    <location>
        <position position="621"/>
    </location>
</feature>
<feature type="sequence variant" id="VAR_085185" description="In FTDALS5; impaired degradation by the ubiquitin proteasome system (UPS); dbSNP:rs771621178." evidence="11">
    <original>E</original>
    <variation>K</variation>
    <location>
        <position position="624"/>
    </location>
</feature>
<feature type="sequence variant" id="VAR_085186" description="In FTDALS5; uncertain significance; impaired degradation by the ubiquitin proteasome system (UPS); dbSNP:rs762663630." evidence="11">
    <original>I</original>
    <variation>T</variation>
    <location>
        <position position="772"/>
    </location>
</feature>
<feature type="mutagenesis site" description="Impairs interaction with SKP1 and CUL1 and prevents degradation of CP110, leading to promote the formation of micronuclei. Increased interaction with RRM2 and lack of RRM2 ubiquitination." evidence="6 8">
    <original>LP</original>
    <variation>AA</variation>
    <location>
        <begin position="35"/>
        <end position="36"/>
    </location>
</feature>
<feature type="mutagenesis site" description="Reduces the interaction with MYBL2/BMYB. Disrupts the interaction with CDC6. Does not disrupt interaction with CUL1." evidence="9 10">
    <original>MR</original>
    <variation>AA</variation>
    <location>
        <begin position="309"/>
        <end position="310"/>
    </location>
</feature>
<feature type="mutagenesis site" description="Reduced degradation of RRM2 after UV-induced DNA-damage. Abolishes the interaction with CP110 and RRM2; when associated with A-352." evidence="6 8">
    <original>M</original>
    <variation>A</variation>
    <location>
        <position position="309"/>
    </location>
</feature>
<feature type="mutagenesis site" description="Reduces the interaction with FZR1/CDH1. Reduced ubiquitination. Abolishes the interaction with FZR1/CDH1; when associated with 351-R--L-354. Loss of ubiquitination and impaired degradation; when associated with 351-R--L-354." evidence="12">
    <original>RYIL</original>
    <variation>AYIA</variation>
    <location>
        <begin position="310"/>
        <end position="313"/>
    </location>
</feature>
<feature type="mutagenesis site" description="Reduces the interaction with FZR1/CDH1." evidence="12">
    <original>RRRL</original>
    <variation>ARRA</variation>
    <location>
        <begin position="343"/>
        <end position="346"/>
    </location>
</feature>
<feature type="mutagenesis site" description="Reduces the interaction with FZR1/CDH1." evidence="12">
    <original>RYRL</original>
    <variation>AYRA</variation>
    <location>
        <begin position="349"/>
        <end position="352"/>
    </location>
</feature>
<feature type="mutagenesis site" description="Reduces the interaction with FZR1/CDH1. Abolishes the interaction with FZR1/CDH1; when associated with 310-R--L-313. Loss of ubiquitination and impaired degradation; when associated with 310-R--L-313." evidence="12">
    <original>RLQL</original>
    <variation>ALQA</variation>
    <location>
        <begin position="351"/>
        <end position="354"/>
    </location>
</feature>
<feature type="mutagenesis site" description="Abolishes the interaction with CP110 and RRM2; when associated with A-309." evidence="6 8">
    <original>L</original>
    <variation>A</variation>
    <location>
        <position position="352"/>
    </location>
</feature>
<feature type="mutagenesis site" description="Reduces the interaction with FZR1/CDH1." evidence="12">
    <original>RINL</original>
    <variation>AINA</variation>
    <location>
        <begin position="767"/>
        <end position="770"/>
    </location>
</feature>
<feature type="sequence conflict" description="In Ref. 2; CAA85308." evidence="16" ref="2">
    <original>A</original>
    <variation>R</variation>
    <location>
        <position position="252"/>
    </location>
</feature>
<feature type="sequence conflict" description="In Ref. 2; CAA85308." evidence="16" ref="2">
    <original>K</original>
    <variation>N</variation>
    <location>
        <position position="324"/>
    </location>
</feature>
<feature type="sequence conflict" description="In Ref. 3; BAG36170." evidence="16" ref="3">
    <original>L</original>
    <variation>H</variation>
    <location>
        <position position="434"/>
    </location>
</feature>
<feature type="sequence conflict" description="In Ref. 2; CAA85308." evidence="16" ref="2">
    <original>L</original>
    <variation>V</variation>
    <location>
        <position position="600"/>
    </location>
</feature>
<feature type="sequence conflict" description="In Ref. 2; CAA85308." evidence="16" ref="2">
    <original>D</original>
    <variation>A</variation>
    <location>
        <position position="662"/>
    </location>
</feature>
<feature type="sequence conflict" description="In Ref. 1; AAB60342." evidence="16" ref="1">
    <original>P</original>
    <variation>S</variation>
    <location>
        <position position="710"/>
    </location>
</feature>
<feature type="sequence conflict" description="In Ref. 2; CAA85308." evidence="16" ref="2">
    <original>D</original>
    <variation>H</variation>
    <location>
        <position position="731"/>
    </location>
</feature>
<reference key="1">
    <citation type="journal article" date="1994" name="EMBO J.">
        <title>Human cyclin F.</title>
        <authorList>
            <person name="Bai C."/>
            <person name="Richman R."/>
            <person name="Elledge S.J."/>
        </authorList>
    </citation>
    <scope>NUCLEOTIDE SEQUENCE [MRNA]</scope>
    <scope>TISSUE SPECIFICITY</scope>
    <scope>DEVELOPMENTAL STAGE</scope>
    <scope>SUBCELLULAR LOCATION</scope>
    <scope>PHOSPHORYLATION</scope>
</reference>
<reference key="2">
    <citation type="journal article" date="1994" name="Genomics">
        <title>A novel cyclin gene (CCNF) in the region of the polycystic kidney disease gene (PKD1).</title>
        <authorList>
            <person name="Kraus B."/>
            <person name="Pohlschmidt M."/>
            <person name="Leung A.L.S."/>
            <person name="Germino G.G."/>
            <person name="Snarey A."/>
            <person name="Schneider M.C."/>
            <person name="Reeders S.T."/>
            <person name="Frischauf A.-M."/>
        </authorList>
    </citation>
    <scope>NUCLEOTIDE SEQUENCE [MRNA]</scope>
</reference>
<reference key="3">
    <citation type="journal article" date="2004" name="Nat. Genet.">
        <title>Complete sequencing and characterization of 21,243 full-length human cDNAs.</title>
        <authorList>
            <person name="Ota T."/>
            <person name="Suzuki Y."/>
            <person name="Nishikawa T."/>
            <person name="Otsuki T."/>
            <person name="Sugiyama T."/>
            <person name="Irie R."/>
            <person name="Wakamatsu A."/>
            <person name="Hayashi K."/>
            <person name="Sato H."/>
            <person name="Nagai K."/>
            <person name="Kimura K."/>
            <person name="Makita H."/>
            <person name="Sekine M."/>
            <person name="Obayashi M."/>
            <person name="Nishi T."/>
            <person name="Shibahara T."/>
            <person name="Tanaka T."/>
            <person name="Ishii S."/>
            <person name="Yamamoto J."/>
            <person name="Saito K."/>
            <person name="Kawai Y."/>
            <person name="Isono Y."/>
            <person name="Nakamura Y."/>
            <person name="Nagahari K."/>
            <person name="Murakami K."/>
            <person name="Yasuda T."/>
            <person name="Iwayanagi T."/>
            <person name="Wagatsuma M."/>
            <person name="Shiratori A."/>
            <person name="Sudo H."/>
            <person name="Hosoiri T."/>
            <person name="Kaku Y."/>
            <person name="Kodaira H."/>
            <person name="Kondo H."/>
            <person name="Sugawara M."/>
            <person name="Takahashi M."/>
            <person name="Kanda K."/>
            <person name="Yokoi T."/>
            <person name="Furuya T."/>
            <person name="Kikkawa E."/>
            <person name="Omura Y."/>
            <person name="Abe K."/>
            <person name="Kamihara K."/>
            <person name="Katsuta N."/>
            <person name="Sato K."/>
            <person name="Tanikawa M."/>
            <person name="Yamazaki M."/>
            <person name="Ninomiya K."/>
            <person name="Ishibashi T."/>
            <person name="Yamashita H."/>
            <person name="Murakawa K."/>
            <person name="Fujimori K."/>
            <person name="Tanai H."/>
            <person name="Kimata M."/>
            <person name="Watanabe M."/>
            <person name="Hiraoka S."/>
            <person name="Chiba Y."/>
            <person name="Ishida S."/>
            <person name="Ono Y."/>
            <person name="Takiguchi S."/>
            <person name="Watanabe S."/>
            <person name="Yosida M."/>
            <person name="Hotuta T."/>
            <person name="Kusano J."/>
            <person name="Kanehori K."/>
            <person name="Takahashi-Fujii A."/>
            <person name="Hara H."/>
            <person name="Tanase T.-O."/>
            <person name="Nomura Y."/>
            <person name="Togiya S."/>
            <person name="Komai F."/>
            <person name="Hara R."/>
            <person name="Takeuchi K."/>
            <person name="Arita M."/>
            <person name="Imose N."/>
            <person name="Musashino K."/>
            <person name="Yuuki H."/>
            <person name="Oshima A."/>
            <person name="Sasaki N."/>
            <person name="Aotsuka S."/>
            <person name="Yoshikawa Y."/>
            <person name="Matsunawa H."/>
            <person name="Ichihara T."/>
            <person name="Shiohata N."/>
            <person name="Sano S."/>
            <person name="Moriya S."/>
            <person name="Momiyama H."/>
            <person name="Satoh N."/>
            <person name="Takami S."/>
            <person name="Terashima Y."/>
            <person name="Suzuki O."/>
            <person name="Nakagawa S."/>
            <person name="Senoh A."/>
            <person name="Mizoguchi H."/>
            <person name="Goto Y."/>
            <person name="Shimizu F."/>
            <person name="Wakebe H."/>
            <person name="Hishigaki H."/>
            <person name="Watanabe T."/>
            <person name="Sugiyama A."/>
            <person name="Takemoto M."/>
            <person name="Kawakami B."/>
            <person name="Yamazaki M."/>
            <person name="Watanabe K."/>
            <person name="Kumagai A."/>
            <person name="Itakura S."/>
            <person name="Fukuzumi Y."/>
            <person name="Fujimori Y."/>
            <person name="Komiyama M."/>
            <person name="Tashiro H."/>
            <person name="Tanigami A."/>
            <person name="Fujiwara T."/>
            <person name="Ono T."/>
            <person name="Yamada K."/>
            <person name="Fujii Y."/>
            <person name="Ozaki K."/>
            <person name="Hirao M."/>
            <person name="Ohmori Y."/>
            <person name="Kawabata A."/>
            <person name="Hikiji T."/>
            <person name="Kobatake N."/>
            <person name="Inagaki H."/>
            <person name="Ikema Y."/>
            <person name="Okamoto S."/>
            <person name="Okitani R."/>
            <person name="Kawakami T."/>
            <person name="Noguchi S."/>
            <person name="Itoh T."/>
            <person name="Shigeta K."/>
            <person name="Senba T."/>
            <person name="Matsumura K."/>
            <person name="Nakajima Y."/>
            <person name="Mizuno T."/>
            <person name="Morinaga M."/>
            <person name="Sasaki M."/>
            <person name="Togashi T."/>
            <person name="Oyama M."/>
            <person name="Hata H."/>
            <person name="Watanabe M."/>
            <person name="Komatsu T."/>
            <person name="Mizushima-Sugano J."/>
            <person name="Satoh T."/>
            <person name="Shirai Y."/>
            <person name="Takahashi Y."/>
            <person name="Nakagawa K."/>
            <person name="Okumura K."/>
            <person name="Nagase T."/>
            <person name="Nomura N."/>
            <person name="Kikuchi H."/>
            <person name="Masuho Y."/>
            <person name="Yamashita R."/>
            <person name="Nakai K."/>
            <person name="Yada T."/>
            <person name="Nakamura Y."/>
            <person name="Ohara O."/>
            <person name="Isogai T."/>
            <person name="Sugano S."/>
        </authorList>
    </citation>
    <scope>NUCLEOTIDE SEQUENCE [LARGE SCALE MRNA]</scope>
    <source>
        <tissue>Thymus</tissue>
    </source>
</reference>
<reference key="4">
    <citation type="journal article" date="2004" name="Nature">
        <title>The sequence and analysis of duplication-rich human chromosome 16.</title>
        <authorList>
            <person name="Martin J."/>
            <person name="Han C."/>
            <person name="Gordon L.A."/>
            <person name="Terry A."/>
            <person name="Prabhakar S."/>
            <person name="She X."/>
            <person name="Xie G."/>
            <person name="Hellsten U."/>
            <person name="Chan Y.M."/>
            <person name="Altherr M."/>
            <person name="Couronne O."/>
            <person name="Aerts A."/>
            <person name="Bajorek E."/>
            <person name="Black S."/>
            <person name="Blumer H."/>
            <person name="Branscomb E."/>
            <person name="Brown N.C."/>
            <person name="Bruno W.J."/>
            <person name="Buckingham J.M."/>
            <person name="Callen D.F."/>
            <person name="Campbell C.S."/>
            <person name="Campbell M.L."/>
            <person name="Campbell E.W."/>
            <person name="Caoile C."/>
            <person name="Challacombe J.F."/>
            <person name="Chasteen L.A."/>
            <person name="Chertkov O."/>
            <person name="Chi H.C."/>
            <person name="Christensen M."/>
            <person name="Clark L.M."/>
            <person name="Cohn J.D."/>
            <person name="Denys M."/>
            <person name="Detter J.C."/>
            <person name="Dickson M."/>
            <person name="Dimitrijevic-Bussod M."/>
            <person name="Escobar J."/>
            <person name="Fawcett J.J."/>
            <person name="Flowers D."/>
            <person name="Fotopulos D."/>
            <person name="Glavina T."/>
            <person name="Gomez M."/>
            <person name="Gonzales E."/>
            <person name="Goodstein D."/>
            <person name="Goodwin L.A."/>
            <person name="Grady D.L."/>
            <person name="Grigoriev I."/>
            <person name="Groza M."/>
            <person name="Hammon N."/>
            <person name="Hawkins T."/>
            <person name="Haydu L."/>
            <person name="Hildebrand C.E."/>
            <person name="Huang W."/>
            <person name="Israni S."/>
            <person name="Jett J."/>
            <person name="Jewett P.B."/>
            <person name="Kadner K."/>
            <person name="Kimball H."/>
            <person name="Kobayashi A."/>
            <person name="Krawczyk M.-C."/>
            <person name="Leyba T."/>
            <person name="Longmire J.L."/>
            <person name="Lopez F."/>
            <person name="Lou Y."/>
            <person name="Lowry S."/>
            <person name="Ludeman T."/>
            <person name="Manohar C.F."/>
            <person name="Mark G.A."/>
            <person name="McMurray K.L."/>
            <person name="Meincke L.J."/>
            <person name="Morgan J."/>
            <person name="Moyzis R.K."/>
            <person name="Mundt M.O."/>
            <person name="Munk A.C."/>
            <person name="Nandkeshwar R.D."/>
            <person name="Pitluck S."/>
            <person name="Pollard M."/>
            <person name="Predki P."/>
            <person name="Parson-Quintana B."/>
            <person name="Ramirez L."/>
            <person name="Rash S."/>
            <person name="Retterer J."/>
            <person name="Ricke D.O."/>
            <person name="Robinson D.L."/>
            <person name="Rodriguez A."/>
            <person name="Salamov A."/>
            <person name="Saunders E.H."/>
            <person name="Scott D."/>
            <person name="Shough T."/>
            <person name="Stallings R.L."/>
            <person name="Stalvey M."/>
            <person name="Sutherland R.D."/>
            <person name="Tapia R."/>
            <person name="Tesmer J.G."/>
            <person name="Thayer N."/>
            <person name="Thompson L.S."/>
            <person name="Tice H."/>
            <person name="Torney D.C."/>
            <person name="Tran-Gyamfi M."/>
            <person name="Tsai M."/>
            <person name="Ulanovsky L.E."/>
            <person name="Ustaszewska A."/>
            <person name="Vo N."/>
            <person name="White P.S."/>
            <person name="Williams A.L."/>
            <person name="Wills P.L."/>
            <person name="Wu J.-R."/>
            <person name="Wu K."/>
            <person name="Yang J."/>
            <person name="DeJong P."/>
            <person name="Bruce D."/>
            <person name="Doggett N.A."/>
            <person name="Deaven L."/>
            <person name="Schmutz J."/>
            <person name="Grimwood J."/>
            <person name="Richardson P."/>
            <person name="Rokhsar D.S."/>
            <person name="Eichler E.E."/>
            <person name="Gilna P."/>
            <person name="Lucas S.M."/>
            <person name="Myers R.M."/>
            <person name="Rubin E.M."/>
            <person name="Pennacchio L.A."/>
        </authorList>
    </citation>
    <scope>NUCLEOTIDE SEQUENCE [LARGE SCALE GENOMIC DNA]</scope>
</reference>
<reference key="5">
    <citation type="journal article" date="2004" name="Genome Res.">
        <title>The status, quality, and expansion of the NIH full-length cDNA project: the Mammalian Gene Collection (MGC).</title>
        <authorList>
            <consortium name="The MGC Project Team"/>
        </authorList>
    </citation>
    <scope>NUCLEOTIDE SEQUENCE [LARGE SCALE MRNA]</scope>
    <source>
        <tissue>Eye</tissue>
    </source>
</reference>
<reference key="6">
    <citation type="journal article" date="1996" name="Cell">
        <title>SKP1 connects cell cycle regulators to the ubiquitin proteolysis machinery through a novel motif, the F-box.</title>
        <authorList>
            <person name="Bai C."/>
            <person name="Sen P."/>
            <person name="Hofmann K."/>
            <person name="Ma L."/>
            <person name="Goebl M."/>
            <person name="Harper J.W."/>
            <person name="Elledge S.J."/>
        </authorList>
    </citation>
    <scope>FUNCTION</scope>
    <scope>INTERACTION WITH SKP1</scope>
</reference>
<reference key="7">
    <citation type="journal article" date="2000" name="EMBO J.">
        <title>Cyclin F regulates the nuclear localization of cyclin B1 through a cyclin-cyclin interaction.</title>
        <authorList>
            <person name="Kong M."/>
            <person name="Barnes E.A."/>
            <person name="Ollendorff V."/>
            <person name="Donoghue D.J."/>
        </authorList>
    </citation>
    <scope>SUBCELLULAR LOCATION</scope>
    <scope>NUCLEAR LOCALIZATION SIGNAL</scope>
    <scope>DOMAIN</scope>
    <scope>INTERACTION WITH CCNB1</scope>
</reference>
<reference key="8">
    <citation type="journal article" date="2002" name="J. Biol. Chem.">
        <title>Cyclin F is degraded during G2-M by mechanisms fundamentally different from other cyclins.</title>
        <authorList>
            <person name="Fung T.K."/>
            <person name="Siu W.Y."/>
            <person name="Yam C.H."/>
            <person name="Lau A."/>
            <person name="Poon R.Y."/>
        </authorList>
    </citation>
    <scope>INTERACTION WITH SKP1</scope>
    <scope>DEGRADATION</scope>
</reference>
<reference key="9">
    <citation type="journal article" date="2010" name="Nature">
        <title>SCF(Cyclin F) controls centrosome homeostasis and mitotic fidelity through CP110 degradation.</title>
        <authorList>
            <person name="D'Angiolella V."/>
            <person name="Donato V."/>
            <person name="Vijayakumar S."/>
            <person name="Saraf A."/>
            <person name="Florens L."/>
            <person name="Washburn M.P."/>
            <person name="Dynlacht B."/>
            <person name="Pagano M."/>
        </authorList>
    </citation>
    <scope>FUNCTION</scope>
    <scope>SUBCELLULAR LOCATION</scope>
    <scope>IDENTIFICATION IN THE SCF(CCNF) COMPLEX WITH SKP1 AND CUL1</scope>
    <scope>INTERACTION WITH CP110</scope>
    <scope>MUTAGENESIS OF 35-LEU-PRO-36; MET-309 AND LEU-352</scope>
</reference>
<reference key="10">
    <citation type="journal article" date="2012" name="Cell">
        <title>Cyclin F-mediated degradation of ribonucleotide reductase M2 controls genome integrity and DNA repair.</title>
        <authorList>
            <person name="D'Angiolella V."/>
            <person name="Donato V."/>
            <person name="Forrester F.M."/>
            <person name="Jeong Y.T."/>
            <person name="Pellacani C."/>
            <person name="Kudo Y."/>
            <person name="Saraf A."/>
            <person name="Florens L."/>
            <person name="Washburn M.P."/>
            <person name="Pagano M."/>
        </authorList>
    </citation>
    <scope>FUNCTION</scope>
    <scope>INTERACTION WITH RRM2</scope>
    <scope>SUBCELLULAR LOCATION</scope>
    <scope>INDUCTION BY DNA DAMAGE</scope>
    <scope>MUTAGENESIS OF 35-LEU-PRO-36; MET-309 AND LEU-352</scope>
</reference>
<reference key="11">
    <citation type="journal article" date="2012" name="EMBO Rep.">
        <title>Neurl4, a novel daughter centriole protein, prevents formation of ectopic microtubule organizing centres.</title>
        <authorList>
            <person name="Li J."/>
            <person name="Kim S."/>
            <person name="Kobayashi T."/>
            <person name="Liang F.X."/>
            <person name="Korzeniewski N."/>
            <person name="Duensing S."/>
            <person name="Dynlacht B.D."/>
        </authorList>
    </citation>
    <scope>INTERACTION WITH CCP110</scope>
</reference>
<reference key="12">
    <citation type="journal article" date="2015" name="Nat. Commun.">
        <title>Cyclin F suppresses B-Myb activity to promote cell cycle checkpoint control.</title>
        <authorList>
            <person name="Klein D.K."/>
            <person name="Hoffmann S."/>
            <person name="Ahlskog J.K."/>
            <person name="O'Hanlon K."/>
            <person name="Quaas M."/>
            <person name="Larsen B.D."/>
            <person name="Rolland B."/>
            <person name="Roesner H.I."/>
            <person name="Walter D."/>
            <person name="Kousholt A.N."/>
            <person name="Menzel T."/>
            <person name="Lees M."/>
            <person name="Johansen J.V."/>
            <person name="Rappsilber J."/>
            <person name="Engeland K."/>
            <person name="Soerensen C.S."/>
        </authorList>
    </citation>
    <scope>FUNCTION</scope>
    <scope>INTERACTION WITH MYBL2</scope>
    <scope>MUTAGENESIS OF 309-MET-ARG-310</scope>
</reference>
<reference key="13">
    <citation type="journal article" date="2016" name="Cell Rep.">
        <title>APC/C and SCF(cyclin F) Constitute a Reciprocal Feedback Circuit Controlling S-Phase Entry.</title>
        <authorList>
            <person name="Choudhury R."/>
            <person name="Bonacci T."/>
            <person name="Arceci A."/>
            <person name="Lahiri D."/>
            <person name="Mills C.A."/>
            <person name="Kernan J.L."/>
            <person name="Branigan T.B."/>
            <person name="DeCaprio J.A."/>
            <person name="Burke D.J."/>
            <person name="Emanuele M.J."/>
        </authorList>
    </citation>
    <scope>FUNCTION</scope>
    <scope>INTERACTION WITH FZR1/CDH1 AND CDC20</scope>
    <scope>DEVELOPMENTAL STAGE</scope>
    <scope>DOMAIN</scope>
    <scope>UBIQUITINATION</scope>
    <scope>D BOX MOTIFS</scope>
    <scope>MUTAGENESIS OF 310-ARG--LEU-313 AND 351-ARG--LEU-354</scope>
</reference>
<reference key="14">
    <citation type="journal article" date="2016" name="Nat. Commun.">
        <title>SCF(Cyclin F)-dependent degradation of CDC6 suppresses DNA re-replication.</title>
        <authorList>
            <person name="Walter D."/>
            <person name="Hoffmann S."/>
            <person name="Komseli E.S."/>
            <person name="Rappsilber J."/>
            <person name="Gorgoulis V."/>
            <person name="Soerensen C.S."/>
        </authorList>
    </citation>
    <scope>FUNCTION</scope>
    <scope>INTERACTION WITH CDC6 AND CUL1</scope>
    <scope>SUBCELLULAR LOCATION</scope>
</reference>
<reference key="15">
    <citation type="journal article" date="2016" name="Nat. Commun.">
        <title>CCNF mutations in amyotrophic lateral sclerosis and frontotemporal dementia.</title>
        <authorList>
            <person name="Williams K.L."/>
            <person name="Topp S."/>
            <person name="Yang S."/>
            <person name="Smith B."/>
            <person name="Fifita J.A."/>
            <person name="Warraich S.T."/>
            <person name="Zhang K.Y."/>
            <person name="Farrawell N."/>
            <person name="Vance C."/>
            <person name="Hu X."/>
            <person name="Chesi A."/>
            <person name="Leblond C.S."/>
            <person name="Lee A."/>
            <person name="Rayner S.L."/>
            <person name="Sundaramoorthy V."/>
            <person name="Dobson-Stone C."/>
            <person name="Molloy M.P."/>
            <person name="van Blitterswijk M."/>
            <person name="Dickson D.W."/>
            <person name="Petersen R.C."/>
            <person name="Graff-Radford N.R."/>
            <person name="Boeve B.F."/>
            <person name="Murray M.E."/>
            <person name="Pottier C."/>
            <person name="Don E."/>
            <person name="Winnick C."/>
            <person name="McCann E.P."/>
            <person name="Hogan A."/>
            <person name="Daoud H."/>
            <person name="Levert A."/>
            <person name="Dion P.A."/>
            <person name="Mitsui J."/>
            <person name="Ishiura H."/>
            <person name="Takahashi Y."/>
            <person name="Goto J."/>
            <person name="Kost J."/>
            <person name="Gellera C."/>
            <person name="Gkazi A.S."/>
            <person name="Miller J."/>
            <person name="Stockton J."/>
            <person name="Brooks W.S."/>
            <person name="Boundy K."/>
            <person name="Polak M."/>
            <person name="Munoz-Blanco J.L."/>
            <person name="Esteban-Perez J."/>
            <person name="Rabano A."/>
            <person name="Hardiman O."/>
            <person name="Morrison K.E."/>
            <person name="Ticozzi N."/>
            <person name="Silani V."/>
            <person name="de Belleroche J."/>
            <person name="Glass J.D."/>
            <person name="Kwok J.B."/>
            <person name="Guillemin G.J."/>
            <person name="Chung R.S."/>
            <person name="Tsuji S."/>
            <person name="Brown R.H. Jr."/>
            <person name="Garcia-Redondo A."/>
            <person name="Rademakers R."/>
            <person name="Landers J.E."/>
            <person name="Gitler A.D."/>
            <person name="Rouleau G.A."/>
            <person name="Cole N.J."/>
            <person name="Yerbury J.J."/>
            <person name="Atkin J.D."/>
            <person name="Shaw C.E."/>
            <person name="Nicholson G.A."/>
            <person name="Blair I.P."/>
        </authorList>
    </citation>
    <scope>INVOLVEMENT IN FTDALS5</scope>
    <scope>VARIANTS FTDALS5 GLY-3; ARG-97; ILE-181; ARG-195; THR-392; PRO-509; ILE-543; GLY-621; LYS-624 AND THR-772</scope>
    <scope>CHARACTERIZATION OF VARIANTS FTDALS5 GLY-3; ARG-97; ARG-195; THR-392; PRO-509; GLY-621; LYS-624 AND THR-772</scope>
    <scope>FUNCTION</scope>
</reference>
<reference key="16">
    <citation type="journal article" date="2018" name="Cell. Mol. Life Sci.">
        <title>Pathogenic mutation in the ALS/FTD gene, CCNF, causes elevated Lys48-linked ubiquitylation and defective autophagy.</title>
        <authorList>
            <person name="Lee A."/>
            <person name="Rayner S.L."/>
            <person name="Gwee S.S.L."/>
            <person name="De Luca A."/>
            <person name="Shahheydari H."/>
            <person name="Sundaramoorthy V."/>
            <person name="Ragagnin A."/>
            <person name="Morsch M."/>
            <person name="Radford R."/>
            <person name="Galper J."/>
            <person name="Freckleton S."/>
            <person name="Shi B."/>
            <person name="Walker A.K."/>
            <person name="Don E.K."/>
            <person name="Cole N.J."/>
            <person name="Yang S."/>
            <person name="Williams K.L."/>
            <person name="Yerbury J.J."/>
            <person name="Blair I.P."/>
            <person name="Atkin J.D."/>
            <person name="Molloy M.P."/>
            <person name="Chung R.S."/>
        </authorList>
    </citation>
    <scope>CHARACTERIZATION OF VARIANT FTDALS5 GLY-621</scope>
    <scope>FUNCTION</scope>
</reference>
<protein>
    <recommendedName>
        <fullName>Cyclin-F</fullName>
    </recommendedName>
    <alternativeName>
        <fullName>F-box only protein 1</fullName>
    </alternativeName>
</protein>
<evidence type="ECO:0000255" key="1"/>
<evidence type="ECO:0000255" key="2">
    <source>
        <dbReference type="PROSITE-ProRule" id="PRU00080"/>
    </source>
</evidence>
<evidence type="ECO:0000256" key="3">
    <source>
        <dbReference type="SAM" id="MobiDB-lite"/>
    </source>
</evidence>
<evidence type="ECO:0000269" key="4">
    <source>
    </source>
</evidence>
<evidence type="ECO:0000269" key="5">
    <source>
    </source>
</evidence>
<evidence type="ECO:0000269" key="6">
    <source>
    </source>
</evidence>
<evidence type="ECO:0000269" key="7">
    <source>
    </source>
</evidence>
<evidence type="ECO:0000269" key="8">
    <source>
    </source>
</evidence>
<evidence type="ECO:0000269" key="9">
    <source>
    </source>
</evidence>
<evidence type="ECO:0000269" key="10">
    <source>
    </source>
</evidence>
<evidence type="ECO:0000269" key="11">
    <source>
    </source>
</evidence>
<evidence type="ECO:0000269" key="12">
    <source>
    </source>
</evidence>
<evidence type="ECO:0000269" key="13">
    <source>
    </source>
</evidence>
<evidence type="ECO:0000269" key="14">
    <source>
    </source>
</evidence>
<evidence type="ECO:0000269" key="15">
    <source>
    </source>
</evidence>
<evidence type="ECO:0000305" key="16"/>
<evidence type="ECO:0000305" key="17">
    <source>
    </source>
</evidence>
<evidence type="ECO:0000305" key="18">
    <source>
    </source>
</evidence>
<name>CCNF_HUMAN</name>
<dbReference type="EMBL" id="U17105">
    <property type="protein sequence ID" value="AAB60342.1"/>
    <property type="molecule type" value="mRNA"/>
</dbReference>
<dbReference type="EMBL" id="Z36714">
    <property type="protein sequence ID" value="CAA85308.1"/>
    <property type="molecule type" value="mRNA"/>
</dbReference>
<dbReference type="EMBL" id="AK313371">
    <property type="protein sequence ID" value="BAG36170.1"/>
    <property type="molecule type" value="mRNA"/>
</dbReference>
<dbReference type="EMBL" id="AC106820">
    <property type="status" value="NOT_ANNOTATED_CDS"/>
    <property type="molecule type" value="Genomic_DNA"/>
</dbReference>
<dbReference type="EMBL" id="BC012349">
    <property type="protein sequence ID" value="AAH12349.1"/>
    <property type="molecule type" value="mRNA"/>
</dbReference>
<dbReference type="CCDS" id="CCDS10467.1"/>
<dbReference type="PIR" id="A55501">
    <property type="entry name" value="A55501"/>
</dbReference>
<dbReference type="RefSeq" id="NP_001752.2">
    <property type="nucleotide sequence ID" value="NM_001761.3"/>
</dbReference>
<dbReference type="PDB" id="9CB3">
    <property type="method" value="EM"/>
    <property type="resolution" value="3.47 A"/>
    <property type="chains" value="A=1-636"/>
</dbReference>
<dbReference type="PDBsum" id="9CB3"/>
<dbReference type="EMDB" id="EMD-45413"/>
<dbReference type="SMR" id="P41002"/>
<dbReference type="BioGRID" id="107339">
    <property type="interactions" value="2799"/>
</dbReference>
<dbReference type="ComplexPortal" id="CPX-7846">
    <property type="entry name" value="SCF E3 ubiquitin ligase complex, CCNF variant"/>
</dbReference>
<dbReference type="CORUM" id="P41002"/>
<dbReference type="DIP" id="DIP-44939N"/>
<dbReference type="FunCoup" id="P41002">
    <property type="interactions" value="588"/>
</dbReference>
<dbReference type="IntAct" id="P41002">
    <property type="interactions" value="8"/>
</dbReference>
<dbReference type="MINT" id="P41002"/>
<dbReference type="STRING" id="9606.ENSP00000380256"/>
<dbReference type="GlyGen" id="P41002">
    <property type="glycosylation" value="1 site"/>
</dbReference>
<dbReference type="iPTMnet" id="P41002"/>
<dbReference type="PhosphoSitePlus" id="P41002"/>
<dbReference type="SwissPalm" id="P41002"/>
<dbReference type="BioMuta" id="CCNF"/>
<dbReference type="DMDM" id="20178283"/>
<dbReference type="jPOST" id="P41002"/>
<dbReference type="MassIVE" id="P41002"/>
<dbReference type="PaxDb" id="9606-ENSP00000380256"/>
<dbReference type="PeptideAtlas" id="P41002"/>
<dbReference type="ProteomicsDB" id="55398"/>
<dbReference type="Pumba" id="P41002"/>
<dbReference type="Antibodypedia" id="10421">
    <property type="antibodies" value="220 antibodies from 33 providers"/>
</dbReference>
<dbReference type="DNASU" id="899"/>
<dbReference type="Ensembl" id="ENST00000397066.9">
    <property type="protein sequence ID" value="ENSP00000380256.4"/>
    <property type="gene ID" value="ENSG00000162063.13"/>
</dbReference>
<dbReference type="GeneID" id="899"/>
<dbReference type="KEGG" id="hsa:899"/>
<dbReference type="MANE-Select" id="ENST00000397066.9">
    <property type="protein sequence ID" value="ENSP00000380256.4"/>
    <property type="RefSeq nucleotide sequence ID" value="NM_001761.3"/>
    <property type="RefSeq protein sequence ID" value="NP_001752.2"/>
</dbReference>
<dbReference type="UCSC" id="uc002cqd.2">
    <property type="organism name" value="human"/>
</dbReference>
<dbReference type="AGR" id="HGNC:1591"/>
<dbReference type="CTD" id="899"/>
<dbReference type="DisGeNET" id="899"/>
<dbReference type="GeneCards" id="CCNF"/>
<dbReference type="HGNC" id="HGNC:1591">
    <property type="gene designation" value="CCNF"/>
</dbReference>
<dbReference type="HPA" id="ENSG00000162063">
    <property type="expression patterns" value="Tissue enhanced (lymphoid)"/>
</dbReference>
<dbReference type="MalaCards" id="CCNF"/>
<dbReference type="MIM" id="600227">
    <property type="type" value="gene"/>
</dbReference>
<dbReference type="MIM" id="619141">
    <property type="type" value="phenotype"/>
</dbReference>
<dbReference type="neXtProt" id="NX_P41002"/>
<dbReference type="OpenTargets" id="ENSG00000162063"/>
<dbReference type="Orphanet" id="803">
    <property type="disease" value="Amyotrophic lateral sclerosis"/>
</dbReference>
<dbReference type="PharmGKB" id="PA26156"/>
<dbReference type="VEuPathDB" id="HostDB:ENSG00000162063"/>
<dbReference type="eggNOG" id="KOG0654">
    <property type="taxonomic scope" value="Eukaryota"/>
</dbReference>
<dbReference type="GeneTree" id="ENSGT00810000125541"/>
<dbReference type="HOGENOM" id="CLU_020348_0_0_1"/>
<dbReference type="InParanoid" id="P41002"/>
<dbReference type="OMA" id="HQAKKSC"/>
<dbReference type="OrthoDB" id="5590282at2759"/>
<dbReference type="PAN-GO" id="P41002">
    <property type="GO annotations" value="7 GO annotations based on evolutionary models"/>
</dbReference>
<dbReference type="PhylomeDB" id="P41002"/>
<dbReference type="TreeFam" id="TF101006"/>
<dbReference type="PathwayCommons" id="P41002"/>
<dbReference type="Reactome" id="R-HSA-8951664">
    <property type="pathway name" value="Neddylation"/>
</dbReference>
<dbReference type="Reactome" id="R-HSA-983168">
    <property type="pathway name" value="Antigen processing: Ubiquitination &amp; Proteasome degradation"/>
</dbReference>
<dbReference type="SignaLink" id="P41002"/>
<dbReference type="SIGNOR" id="P41002"/>
<dbReference type="BioGRID-ORCS" id="899">
    <property type="hits" value="72 hits in 1220 CRISPR screens"/>
</dbReference>
<dbReference type="CD-CODE" id="8C2F96ED">
    <property type="entry name" value="Centrosome"/>
</dbReference>
<dbReference type="ChiTaRS" id="CCNF">
    <property type="organism name" value="human"/>
</dbReference>
<dbReference type="GeneWiki" id="CCNF"/>
<dbReference type="GenomeRNAi" id="899"/>
<dbReference type="Pharos" id="P41002">
    <property type="development level" value="Tbio"/>
</dbReference>
<dbReference type="PRO" id="PR:P41002"/>
<dbReference type="Proteomes" id="UP000005640">
    <property type="component" value="Chromosome 16"/>
</dbReference>
<dbReference type="RNAct" id="P41002">
    <property type="molecule type" value="protein"/>
</dbReference>
<dbReference type="Bgee" id="ENSG00000162063">
    <property type="expression patterns" value="Expressed in primordial germ cell in gonad and 162 other cell types or tissues"/>
</dbReference>
<dbReference type="ExpressionAtlas" id="P41002">
    <property type="expression patterns" value="baseline and differential"/>
</dbReference>
<dbReference type="GO" id="GO:0005814">
    <property type="term" value="C:centriole"/>
    <property type="evidence" value="ECO:0000314"/>
    <property type="project" value="UniProtKB"/>
</dbReference>
<dbReference type="GO" id="GO:0005813">
    <property type="term" value="C:centrosome"/>
    <property type="evidence" value="ECO:0000314"/>
    <property type="project" value="HPA"/>
</dbReference>
<dbReference type="GO" id="GO:0000307">
    <property type="term" value="C:cyclin-dependent protein kinase holoenzyme complex"/>
    <property type="evidence" value="ECO:0000318"/>
    <property type="project" value="GO_Central"/>
</dbReference>
<dbReference type="GO" id="GO:0005737">
    <property type="term" value="C:cytoplasm"/>
    <property type="evidence" value="ECO:0000318"/>
    <property type="project" value="GO_Central"/>
</dbReference>
<dbReference type="GO" id="GO:0005829">
    <property type="term" value="C:cytosol"/>
    <property type="evidence" value="ECO:0000304"/>
    <property type="project" value="Reactome"/>
</dbReference>
<dbReference type="GO" id="GO:0005815">
    <property type="term" value="C:microtubule organizing center"/>
    <property type="evidence" value="ECO:0000318"/>
    <property type="project" value="GO_Central"/>
</dbReference>
<dbReference type="GO" id="GO:0005654">
    <property type="term" value="C:nucleoplasm"/>
    <property type="evidence" value="ECO:0000314"/>
    <property type="project" value="HPA"/>
</dbReference>
<dbReference type="GO" id="GO:0005634">
    <property type="term" value="C:nucleus"/>
    <property type="evidence" value="ECO:0000314"/>
    <property type="project" value="UniProtKB"/>
</dbReference>
<dbReference type="GO" id="GO:0048471">
    <property type="term" value="C:perinuclear region of cytoplasm"/>
    <property type="evidence" value="ECO:0007669"/>
    <property type="project" value="UniProtKB-SubCell"/>
</dbReference>
<dbReference type="GO" id="GO:0019005">
    <property type="term" value="C:SCF ubiquitin ligase complex"/>
    <property type="evidence" value="ECO:0000314"/>
    <property type="project" value="UniProtKB"/>
</dbReference>
<dbReference type="GO" id="GO:0010997">
    <property type="term" value="F:anaphase-promoting complex binding"/>
    <property type="evidence" value="ECO:0000314"/>
    <property type="project" value="UniProtKB"/>
</dbReference>
<dbReference type="GO" id="GO:0016538">
    <property type="term" value="F:cyclin-dependent protein serine/threonine kinase regulator activity"/>
    <property type="evidence" value="ECO:0000318"/>
    <property type="project" value="GO_Central"/>
</dbReference>
<dbReference type="GO" id="GO:0051301">
    <property type="term" value="P:cell division"/>
    <property type="evidence" value="ECO:0007669"/>
    <property type="project" value="UniProtKB-KW"/>
</dbReference>
<dbReference type="GO" id="GO:0000082">
    <property type="term" value="P:G1/S transition of mitotic cell cycle"/>
    <property type="evidence" value="ECO:0000318"/>
    <property type="project" value="GO_Central"/>
</dbReference>
<dbReference type="GO" id="GO:0010826">
    <property type="term" value="P:negative regulation of centrosome duplication"/>
    <property type="evidence" value="ECO:0000314"/>
    <property type="project" value="UniProtKB"/>
</dbReference>
<dbReference type="GO" id="GO:0001890">
    <property type="term" value="P:placenta development"/>
    <property type="evidence" value="ECO:0007669"/>
    <property type="project" value="Ensembl"/>
</dbReference>
<dbReference type="GO" id="GO:0016567">
    <property type="term" value="P:protein ubiquitination"/>
    <property type="evidence" value="ECO:0000314"/>
    <property type="project" value="UniProtKB"/>
</dbReference>
<dbReference type="GO" id="GO:0000320">
    <property type="term" value="P:re-entry into mitotic cell cycle"/>
    <property type="evidence" value="ECO:0007669"/>
    <property type="project" value="Ensembl"/>
</dbReference>
<dbReference type="GO" id="GO:0051726">
    <property type="term" value="P:regulation of cell cycle"/>
    <property type="evidence" value="ECO:0000314"/>
    <property type="project" value="UniProtKB"/>
</dbReference>
<dbReference type="GO" id="GO:0031146">
    <property type="term" value="P:SCF-dependent proteasomal ubiquitin-dependent protein catabolic process"/>
    <property type="evidence" value="ECO:0000314"/>
    <property type="project" value="UniProtKB"/>
</dbReference>
<dbReference type="CDD" id="cd20521">
    <property type="entry name" value="CYCLIN_CCNF_rpt1"/>
    <property type="match status" value="1"/>
</dbReference>
<dbReference type="CDD" id="cd22082">
    <property type="entry name" value="F-box_FBXO1"/>
    <property type="match status" value="1"/>
</dbReference>
<dbReference type="FunFam" id="1.10.472.10:FF:000038">
    <property type="entry name" value="Cyclin F"/>
    <property type="match status" value="1"/>
</dbReference>
<dbReference type="FunFam" id="1.10.472.10:FF:000055">
    <property type="entry name" value="Cyclin F"/>
    <property type="match status" value="1"/>
</dbReference>
<dbReference type="Gene3D" id="1.10.472.10">
    <property type="entry name" value="Cyclin-like"/>
    <property type="match status" value="2"/>
</dbReference>
<dbReference type="Gene3D" id="1.25.40.10">
    <property type="entry name" value="Tetratricopeptide repeat domain"/>
    <property type="match status" value="1"/>
</dbReference>
<dbReference type="InterPro" id="IPR039361">
    <property type="entry name" value="Cyclin"/>
</dbReference>
<dbReference type="InterPro" id="IPR013763">
    <property type="entry name" value="Cyclin-like_dom"/>
</dbReference>
<dbReference type="InterPro" id="IPR036915">
    <property type="entry name" value="Cyclin-like_sf"/>
</dbReference>
<dbReference type="InterPro" id="IPR004367">
    <property type="entry name" value="Cyclin_C-dom"/>
</dbReference>
<dbReference type="InterPro" id="IPR006671">
    <property type="entry name" value="Cyclin_N"/>
</dbReference>
<dbReference type="InterPro" id="IPR048258">
    <property type="entry name" value="Cyclins_cyclin-box"/>
</dbReference>
<dbReference type="InterPro" id="IPR036047">
    <property type="entry name" value="F-box-like_dom_sf"/>
</dbReference>
<dbReference type="InterPro" id="IPR001810">
    <property type="entry name" value="F-box_dom"/>
</dbReference>
<dbReference type="InterPro" id="IPR011990">
    <property type="entry name" value="TPR-like_helical_dom_sf"/>
</dbReference>
<dbReference type="PANTHER" id="PTHR10177">
    <property type="entry name" value="CYCLINS"/>
    <property type="match status" value="1"/>
</dbReference>
<dbReference type="Pfam" id="PF02984">
    <property type="entry name" value="Cyclin_C"/>
    <property type="match status" value="1"/>
</dbReference>
<dbReference type="Pfam" id="PF00134">
    <property type="entry name" value="Cyclin_N"/>
    <property type="match status" value="1"/>
</dbReference>
<dbReference type="Pfam" id="PF12937">
    <property type="entry name" value="F-box-like"/>
    <property type="match status" value="1"/>
</dbReference>
<dbReference type="SMART" id="SM00385">
    <property type="entry name" value="CYCLIN"/>
    <property type="match status" value="2"/>
</dbReference>
<dbReference type="SMART" id="SM01332">
    <property type="entry name" value="Cyclin_C"/>
    <property type="match status" value="1"/>
</dbReference>
<dbReference type="SMART" id="SM00256">
    <property type="entry name" value="FBOX"/>
    <property type="match status" value="1"/>
</dbReference>
<dbReference type="SUPFAM" id="SSF47954">
    <property type="entry name" value="Cyclin-like"/>
    <property type="match status" value="2"/>
</dbReference>
<dbReference type="SUPFAM" id="SSF81383">
    <property type="entry name" value="F-box domain"/>
    <property type="match status" value="1"/>
</dbReference>
<dbReference type="PROSITE" id="PS00292">
    <property type="entry name" value="CYCLINS"/>
    <property type="match status" value="1"/>
</dbReference>
<dbReference type="PROSITE" id="PS50181">
    <property type="entry name" value="FBOX"/>
    <property type="match status" value="1"/>
</dbReference>
<sequence length="786" mass="87640">MGSGGVVHCRCAKCFCYPTKRRIRRRPRNLTILSLPEDVLFHILKWLSVEDILAVRAVHSQLKDLVDNHASVWACASFQELWPSPGNLKLFERAAEKGNFEAAVKLGIAYLYNEGLSVSDEARAEVNGLKASRFFSLAERLNVGAAPFIWLFIRPPWSVSGSCCKAVVHESLRAECQLQRTHKASILHCLGRVLSLFEDEEKQQQAHDLFEEAAHQGCLTSSYLLWESDRRTDVSDPGRCLHSFRKLRDYAAKGCWEAQLSLAKACANANQLGLEVRASSEIVCQLFQASQAVSKQQVFSVQKGLNDTMRYILIDWLVEVATMKDFTSLCLHLTVECVDRYLRRRLVPRYRLQLLGIACMVICTRFISKEILTIREAVWLTDNTYKYEDLVRMMGEIVSALEGKIRVPTVVDYKEVLLTLVPVELRTQHLCSFLCELSLLHTSLSAYAPARLAAAALLLARLTHGQTQPWTTQLWDLTGFSYEDLIPCVLSLHKKCFHDDAPKDYRQVSLTAVKQRFEDKRYGEISQEEVLSYSQLCAALGVTQDSPDPPTFLSTGEIHAFLSSPSGRRTKRKRENSLQEDRGSFVTTPTAELSSQEETLLGSFLDWSLDCCSGYEGDQESEGEKEGDVTAPSGILDVTVVYLNPEQHCCQESSDEEACPEDKGPQDPQALALDTQIPATPGPKPLVRTSREPGKDVTTSGYSSVSTASPTSSVDGGLGALPQPTSVLSLDSDSHTQPCHHQARKSCLQCRPPSPPESSVPQQQVKRINLCIHSEEEDMNLGLVRL</sequence>
<accession>P41002</accession>
<accession>B2R8H3</accession>
<accession>Q96EG9</accession>
<gene>
    <name type="primary">CCNF</name>
    <name type="synonym">FBX1</name>
    <name type="synonym">FBXO1</name>
</gene>
<keyword id="KW-0002">3D-structure</keyword>
<keyword id="KW-0036">Amyotrophic lateral sclerosis</keyword>
<keyword id="KW-0131">Cell cycle</keyword>
<keyword id="KW-0132">Cell division</keyword>
<keyword id="KW-0195">Cyclin</keyword>
<keyword id="KW-0963">Cytoplasm</keyword>
<keyword id="KW-0206">Cytoskeleton</keyword>
<keyword id="KW-0225">Disease variant</keyword>
<keyword id="KW-0498">Mitosis</keyword>
<keyword id="KW-0523">Neurodegeneration</keyword>
<keyword id="KW-0539">Nucleus</keyword>
<keyword id="KW-0597">Phosphoprotein</keyword>
<keyword id="KW-1267">Proteomics identification</keyword>
<keyword id="KW-1185">Reference proteome</keyword>
<keyword id="KW-0832">Ubl conjugation</keyword>
<keyword id="KW-0833">Ubl conjugation pathway</keyword>
<proteinExistence type="evidence at protein level"/>
<organism>
    <name type="scientific">Homo sapiens</name>
    <name type="common">Human</name>
    <dbReference type="NCBI Taxonomy" id="9606"/>
    <lineage>
        <taxon>Eukaryota</taxon>
        <taxon>Metazoa</taxon>
        <taxon>Chordata</taxon>
        <taxon>Craniata</taxon>
        <taxon>Vertebrata</taxon>
        <taxon>Euteleostomi</taxon>
        <taxon>Mammalia</taxon>
        <taxon>Eutheria</taxon>
        <taxon>Euarchontoglires</taxon>
        <taxon>Primates</taxon>
        <taxon>Haplorrhini</taxon>
        <taxon>Catarrhini</taxon>
        <taxon>Hominidae</taxon>
        <taxon>Homo</taxon>
    </lineage>
</organism>
<comment type="function">
    <text evidence="6 8 9 10 11 12 13 15">Substrate recognition component of a SCF (SKP1-CUL1-F-box protein) E3 ubiquitin-protein ligase complex which mediates the ubiquitination and subsequent proteasomal degradation of target proteins (PubMed:20596027, PubMed:22632967, PubMed:26818844, PubMed:27080313, PubMed:27653696, PubMed:28852778). The SCF(CCNF) E3 ubiquitin-protein ligase complex is an integral component of the ubiquitin proteasome system (UPS) and links proteasome degradation to the cell cycle (PubMed:20596027, PubMed:26818844, PubMed:27653696, PubMed:8706131). Mediates the substrate recognition and the proteasomal degradation of various target proteins involved in the regulation of cell cycle progression and in the maintenance of genome stability (PubMed:20596027, PubMed:22632967, PubMed:26818844, PubMed:27653696). Mediates the ubiquitination and proteasomal degradation of CP110 during G2 phase, thereby acting as an inhibitor of centrosome reduplication (PubMed:20596027). In G2, mediates the ubiquitination and subsequent degradation of ribonucleotide reductase RRM2, thereby maintaining a balanced pool of dNTPs and genome integrity (PubMed:22632967). In G2, mediates the ubiquitination and proteasomal degradation of CDC6, thereby suppressing DNA re-replication and preventing genome instability (PubMed:26818844). Involved in the ubiquitination and degradation of the substrate adapter CDH1 of the anaphase-promoting complex (APC/C), thereby acting as an antagonist of APC/C in regulating G1 progression and S phase entry (PubMed:27653696). May play a role in the G2 cell cycle checkpoint control after DNA damage, possibly by promoting the ubiquitination of MYBL2/BMYB (PubMed:25557911).</text>
</comment>
<comment type="subunit">
    <text evidence="4 5 6 7 8 9 10 12 15">Component of the SCF(CCNF) complex consisting of CUL1, RBX1, SKP1 and CCNF (PubMed:20596027). Interacts with SKP1 (PubMed:12122006, PubMed:8706131). Interacts with CUL1 (PubMed:26818844). Interacts with CCNB1; interaction is required for nuclear localization of CCNB1 (PubMed:10716937, PubMed:20596027). Interacts with CCP110; this interaction leads to CCP110 ubiquitination and degradation via the proteasome pathway (PubMed:22441691). Interacts (via the Cyclin N-terminal domain) with MYBL2/BMYB (PubMed:25557911). Interacts with FZR1/CDH1 (via N-terminus) (PubMed:27653696). Interacts with RRM2 (via Cy motif and when phosphorylated at 'Thr-33'); the interaction occurs exclusively in G2 and early M (PubMed:22632967). Interacts with CDC6 (via Cy motif); the interaction takes place during G2 and M phase (PubMed:26818844).</text>
</comment>
<comment type="interaction">
    <interactant intactId="EBI-1207574">
        <id>P41002</id>
    </interactant>
    <interactant intactId="EBI-1566217">
        <id>O43303</id>
        <label>CCP110</label>
    </interactant>
    <organismsDiffer>false</organismsDiffer>
    <experiments>9</experiments>
</comment>
<comment type="interaction">
    <interactant intactId="EBI-1207574">
        <id>P41002</id>
    </interactant>
    <interactant intactId="EBI-359390">
        <id>Q13616</id>
        <label>CUL1</label>
    </interactant>
    <organismsDiffer>false</organismsDiffer>
    <experiments>5</experiments>
</comment>
<comment type="interaction">
    <interactant intactId="EBI-1207574">
        <id>P41002</id>
    </interactant>
    <interactant intactId="EBI-2339245">
        <id>P31350</id>
        <label>RRM2</label>
    </interactant>
    <organismsDiffer>false</organismsDiffer>
    <experiments>12</experiments>
</comment>
<comment type="interaction">
    <interactant intactId="EBI-1207574">
        <id>P41002</id>
    </interactant>
    <interactant intactId="EBI-307486">
        <id>P63208</id>
        <label>SKP1</label>
    </interactant>
    <organismsDiffer>false</organismsDiffer>
    <experiments>9</experiments>
</comment>
<comment type="interaction">
    <interactant intactId="EBI-1207574">
        <id>P41002</id>
    </interactant>
    <interactant intactId="EBI-307497">
        <id>P63208-1</id>
        <label>SKP1</label>
    </interactant>
    <organismsDiffer>false</organismsDiffer>
    <experiments>6</experiments>
</comment>
<comment type="subcellular location">
    <subcellularLocation>
        <location evidence="4 8 10 14">Nucleus</location>
    </subcellularLocation>
    <subcellularLocation>
        <location evidence="14">Cytoplasm</location>
        <location evidence="14">Perinuclear region</location>
    </subcellularLocation>
    <subcellularLocation>
        <location evidence="6">Cytoplasm</location>
        <location evidence="6">Cytoskeleton</location>
        <location evidence="6">Microtubule organizing center</location>
        <location evidence="6">Centrosome</location>
        <location evidence="6">Centriole</location>
    </subcellularLocation>
    <text evidence="6 10">Localization to the centrosome is rare in S phase cells and increases in G2 cells. Localizes to both the mother and daughter centrioles. Localization to centrosomes is not dependent on CP110. Localizes to the nucleus in G2 phase.</text>
</comment>
<comment type="tissue specificity">
    <text evidence="14">Widely expressed, with expression detected in the heart, brain, placenta, lung, liver, skeletal muscle, kidney and pancreas.</text>
</comment>
<comment type="developmental stage">
    <text evidence="12 14">Appears in S phase, peaks in G2 phase, decreases in mitosis, lowest in early G1 phase and then accumulates again in late G1 and S phase (at protein level).</text>
</comment>
<comment type="induction">
    <text evidence="8">Down-regulated in an ATR-dependent manner in response to DNA damage induced by doxorubicin, camptothecin, UV-C, methyl methanesulfonate, nocodazole, or gamma-irradiation. Down-regulation in response to DNA damage is required to allow RRM2 accumulation within the nucleus and for efficient DNA repair.</text>
</comment>
<comment type="domain">
    <text evidence="4">The nuclear localization signals mediate the localization to the nucleus and are required for CCNB1 localization to the nucleus.</text>
</comment>
<comment type="domain">
    <text evidence="12">The D box motifs 1-5 (amino acid sequence RxxL) are involved in substrate binding, such as FZR1/CDH1, and may be ubiquitinated.</text>
</comment>
<comment type="PTM">
    <text evidence="5">Degraded when the spindle assembly checkpoint is activated during the G2-M transition. Degradation depends on the C-terminal PEST sequence.</text>
</comment>
<comment type="PTM">
    <text evidence="14">Phosphorylated just before cells enter into mitosis.</text>
</comment>
<comment type="PTM">
    <text evidence="12">Ubiquitinated by the anaphase-promoting complex (APC/C); leading to its degradation by the proteasome.</text>
</comment>
<comment type="disease" evidence="11 13">
    <disease id="DI-06001">
        <name>Frontotemporal dementia and/or amyotrophic lateral sclerosis 5</name>
        <acronym>FTDALS5</acronym>
        <description>A neurodegenerative disorder characterized by frontotemporal dementia and/or amyotrophic lateral sclerosis in affected individuals. There is high intrafamilial variation. Frontotemporal dementia is characterized by frontal and temporal lobe atrophy associated with neuronal loss, gliosis, and dementia. Patients exhibit progressive changes in social, behavioral, and/or language function. Amyotrophic lateral sclerosis is characterized by the death of motor neurons in the brain, brainstem, and spinal cord, resulting in fatal paralysis. FTDALS5 is an autosomal dominant form with age-dependent penetrance. Penetrance is estimated to be 50% by age 56 and 100% by age 61.</description>
        <dbReference type="MIM" id="619141"/>
    </disease>
    <text>The disease is caused by variants affecting the gene represented in this entry.</text>
</comment>
<comment type="miscellaneous">
    <text evidence="18">Founding member of the F-box domain protein family, which obtained its name from cyclin-F.</text>
</comment>
<comment type="miscellaneous">
    <text evidence="17">Member of the cyclin family, however, unlike most members of the cyclin family, it does not bind or activate a cyclin-dependent kinase.</text>
</comment>
<comment type="similarity">
    <text evidence="16">Belongs to the cyclin family. Cyclin AB subfamily.</text>
</comment>